<comment type="function">
    <text evidence="1">Participates actively in the response to hyperosmotic and heat shock by preventing the aggregation of stress-denatured proteins and by disaggregating proteins, also in an autonomous, DnaK-independent fashion. Unfolded proteins bind initially to DnaJ; upon interaction with the DnaJ-bound protein, DnaK hydrolyzes its bound ATP, resulting in the formation of a stable complex. GrpE releases ADP from DnaK; ATP binding to DnaK triggers the release of the substrate protein, thus completing the reaction cycle. Several rounds of ATP-dependent interactions between DnaJ, DnaK and GrpE are required for fully efficient folding. Also involved, together with DnaK and GrpE, in the DNA replication of plasmids through activation of initiation proteins.</text>
</comment>
<comment type="cofactor">
    <cofactor evidence="1">
        <name>Zn(2+)</name>
        <dbReference type="ChEBI" id="CHEBI:29105"/>
    </cofactor>
    <text evidence="1">Binds 2 Zn(2+) ions per monomer.</text>
</comment>
<comment type="subunit">
    <text evidence="1">Homodimer.</text>
</comment>
<comment type="subcellular location">
    <subcellularLocation>
        <location evidence="1">Cytoplasm</location>
    </subcellularLocation>
</comment>
<comment type="domain">
    <text evidence="1">The J domain is necessary and sufficient to stimulate DnaK ATPase activity. Zinc center 1 plays an important role in the autonomous, DnaK-independent chaperone activity of DnaJ. Zinc center 2 is essential for interaction with DnaK and for DnaJ activity.</text>
</comment>
<comment type="similarity">
    <text evidence="1">Belongs to the DnaJ family.</text>
</comment>
<protein>
    <recommendedName>
        <fullName evidence="1">Chaperone protein DnaJ</fullName>
    </recommendedName>
</protein>
<dbReference type="EMBL" id="AM494475">
    <property type="protein sequence ID" value="CAM79769.1"/>
    <property type="molecule type" value="Genomic_DNA"/>
</dbReference>
<dbReference type="RefSeq" id="WP_011944615.1">
    <property type="nucleotide sequence ID" value="NC_009488.1"/>
</dbReference>
<dbReference type="SMR" id="A5CD86"/>
<dbReference type="KEGG" id="ots:OTBS_0703"/>
<dbReference type="eggNOG" id="COG0484">
    <property type="taxonomic scope" value="Bacteria"/>
</dbReference>
<dbReference type="HOGENOM" id="CLU_017633_0_7_5"/>
<dbReference type="Proteomes" id="UP000001565">
    <property type="component" value="Chromosome"/>
</dbReference>
<dbReference type="GO" id="GO:0005737">
    <property type="term" value="C:cytoplasm"/>
    <property type="evidence" value="ECO:0007669"/>
    <property type="project" value="UniProtKB-SubCell"/>
</dbReference>
<dbReference type="GO" id="GO:0005524">
    <property type="term" value="F:ATP binding"/>
    <property type="evidence" value="ECO:0007669"/>
    <property type="project" value="InterPro"/>
</dbReference>
<dbReference type="GO" id="GO:0031072">
    <property type="term" value="F:heat shock protein binding"/>
    <property type="evidence" value="ECO:0007669"/>
    <property type="project" value="InterPro"/>
</dbReference>
<dbReference type="GO" id="GO:0051082">
    <property type="term" value="F:unfolded protein binding"/>
    <property type="evidence" value="ECO:0007669"/>
    <property type="project" value="UniProtKB-UniRule"/>
</dbReference>
<dbReference type="GO" id="GO:0008270">
    <property type="term" value="F:zinc ion binding"/>
    <property type="evidence" value="ECO:0007669"/>
    <property type="project" value="UniProtKB-UniRule"/>
</dbReference>
<dbReference type="GO" id="GO:0051085">
    <property type="term" value="P:chaperone cofactor-dependent protein refolding"/>
    <property type="evidence" value="ECO:0007669"/>
    <property type="project" value="TreeGrafter"/>
</dbReference>
<dbReference type="GO" id="GO:0006260">
    <property type="term" value="P:DNA replication"/>
    <property type="evidence" value="ECO:0007669"/>
    <property type="project" value="UniProtKB-KW"/>
</dbReference>
<dbReference type="GO" id="GO:0042026">
    <property type="term" value="P:protein refolding"/>
    <property type="evidence" value="ECO:0007669"/>
    <property type="project" value="TreeGrafter"/>
</dbReference>
<dbReference type="GO" id="GO:0009408">
    <property type="term" value="P:response to heat"/>
    <property type="evidence" value="ECO:0007669"/>
    <property type="project" value="InterPro"/>
</dbReference>
<dbReference type="CDD" id="cd06257">
    <property type="entry name" value="DnaJ"/>
    <property type="match status" value="1"/>
</dbReference>
<dbReference type="CDD" id="cd10747">
    <property type="entry name" value="DnaJ_C"/>
    <property type="match status" value="1"/>
</dbReference>
<dbReference type="FunFam" id="1.10.287.110:FF:000034">
    <property type="entry name" value="Chaperone protein DnaJ"/>
    <property type="match status" value="1"/>
</dbReference>
<dbReference type="FunFam" id="2.60.260.20:FF:000005">
    <property type="entry name" value="Chaperone protein dnaJ 1, mitochondrial"/>
    <property type="match status" value="1"/>
</dbReference>
<dbReference type="FunFam" id="2.10.230.10:FF:000002">
    <property type="entry name" value="Molecular chaperone DnaJ"/>
    <property type="match status" value="1"/>
</dbReference>
<dbReference type="Gene3D" id="1.10.287.110">
    <property type="entry name" value="DnaJ domain"/>
    <property type="match status" value="1"/>
</dbReference>
<dbReference type="Gene3D" id="2.10.230.10">
    <property type="entry name" value="Heat shock protein DnaJ, cysteine-rich domain"/>
    <property type="match status" value="1"/>
</dbReference>
<dbReference type="Gene3D" id="2.60.260.20">
    <property type="entry name" value="Urease metallochaperone UreE, N-terminal domain"/>
    <property type="match status" value="2"/>
</dbReference>
<dbReference type="HAMAP" id="MF_01152">
    <property type="entry name" value="DnaJ"/>
    <property type="match status" value="1"/>
</dbReference>
<dbReference type="InterPro" id="IPR012724">
    <property type="entry name" value="DnaJ"/>
</dbReference>
<dbReference type="InterPro" id="IPR002939">
    <property type="entry name" value="DnaJ_C"/>
</dbReference>
<dbReference type="InterPro" id="IPR001623">
    <property type="entry name" value="DnaJ_domain"/>
</dbReference>
<dbReference type="InterPro" id="IPR008971">
    <property type="entry name" value="HSP40/DnaJ_pept-bd"/>
</dbReference>
<dbReference type="InterPro" id="IPR001305">
    <property type="entry name" value="HSP_DnaJ_Cys-rich_dom"/>
</dbReference>
<dbReference type="InterPro" id="IPR036410">
    <property type="entry name" value="HSP_DnaJ_Cys-rich_dom_sf"/>
</dbReference>
<dbReference type="InterPro" id="IPR036869">
    <property type="entry name" value="J_dom_sf"/>
</dbReference>
<dbReference type="NCBIfam" id="TIGR02349">
    <property type="entry name" value="DnaJ_bact"/>
    <property type="match status" value="1"/>
</dbReference>
<dbReference type="NCBIfam" id="NF008035">
    <property type="entry name" value="PRK10767.1"/>
    <property type="match status" value="1"/>
</dbReference>
<dbReference type="PANTHER" id="PTHR43096">
    <property type="entry name" value="DNAJ HOMOLOG 1, MITOCHONDRIAL-RELATED"/>
    <property type="match status" value="1"/>
</dbReference>
<dbReference type="PANTHER" id="PTHR43096:SF52">
    <property type="entry name" value="DNAJ HOMOLOG 1, MITOCHONDRIAL-RELATED"/>
    <property type="match status" value="1"/>
</dbReference>
<dbReference type="Pfam" id="PF00226">
    <property type="entry name" value="DnaJ"/>
    <property type="match status" value="1"/>
</dbReference>
<dbReference type="Pfam" id="PF01556">
    <property type="entry name" value="DnaJ_C"/>
    <property type="match status" value="1"/>
</dbReference>
<dbReference type="Pfam" id="PF00684">
    <property type="entry name" value="DnaJ_CXXCXGXG"/>
    <property type="match status" value="1"/>
</dbReference>
<dbReference type="PRINTS" id="PR00625">
    <property type="entry name" value="JDOMAIN"/>
</dbReference>
<dbReference type="SMART" id="SM00271">
    <property type="entry name" value="DnaJ"/>
    <property type="match status" value="1"/>
</dbReference>
<dbReference type="SUPFAM" id="SSF46565">
    <property type="entry name" value="Chaperone J-domain"/>
    <property type="match status" value="1"/>
</dbReference>
<dbReference type="SUPFAM" id="SSF57938">
    <property type="entry name" value="DnaJ/Hsp40 cysteine-rich domain"/>
    <property type="match status" value="1"/>
</dbReference>
<dbReference type="SUPFAM" id="SSF49493">
    <property type="entry name" value="HSP40/DnaJ peptide-binding domain"/>
    <property type="match status" value="2"/>
</dbReference>
<dbReference type="PROSITE" id="PS50076">
    <property type="entry name" value="DNAJ_2"/>
    <property type="match status" value="1"/>
</dbReference>
<dbReference type="PROSITE" id="PS51188">
    <property type="entry name" value="ZF_CR"/>
    <property type="match status" value="1"/>
</dbReference>
<feature type="chain" id="PRO_1000085237" description="Chaperone protein DnaJ">
    <location>
        <begin position="1"/>
        <end position="377"/>
    </location>
</feature>
<feature type="domain" description="J" evidence="1">
    <location>
        <begin position="5"/>
        <end position="70"/>
    </location>
</feature>
<feature type="repeat" description="CXXCXGXG motif">
    <location>
        <begin position="151"/>
        <end position="158"/>
    </location>
</feature>
<feature type="repeat" description="CXXCXGXG motif">
    <location>
        <begin position="168"/>
        <end position="175"/>
    </location>
</feature>
<feature type="repeat" description="CXXCXGXG motif">
    <location>
        <begin position="190"/>
        <end position="197"/>
    </location>
</feature>
<feature type="repeat" description="CXXCXGXG motif">
    <location>
        <begin position="204"/>
        <end position="211"/>
    </location>
</feature>
<feature type="zinc finger region" description="CR-type" evidence="1">
    <location>
        <begin position="138"/>
        <end position="216"/>
    </location>
</feature>
<feature type="binding site" evidence="1">
    <location>
        <position position="151"/>
    </location>
    <ligand>
        <name>Zn(2+)</name>
        <dbReference type="ChEBI" id="CHEBI:29105"/>
        <label>1</label>
    </ligand>
</feature>
<feature type="binding site" evidence="1">
    <location>
        <position position="154"/>
    </location>
    <ligand>
        <name>Zn(2+)</name>
        <dbReference type="ChEBI" id="CHEBI:29105"/>
        <label>1</label>
    </ligand>
</feature>
<feature type="binding site" evidence="1">
    <location>
        <position position="168"/>
    </location>
    <ligand>
        <name>Zn(2+)</name>
        <dbReference type="ChEBI" id="CHEBI:29105"/>
        <label>2</label>
    </ligand>
</feature>
<feature type="binding site" evidence="1">
    <location>
        <position position="171"/>
    </location>
    <ligand>
        <name>Zn(2+)</name>
        <dbReference type="ChEBI" id="CHEBI:29105"/>
        <label>2</label>
    </ligand>
</feature>
<feature type="binding site" evidence="1">
    <location>
        <position position="190"/>
    </location>
    <ligand>
        <name>Zn(2+)</name>
        <dbReference type="ChEBI" id="CHEBI:29105"/>
        <label>2</label>
    </ligand>
</feature>
<feature type="binding site" evidence="1">
    <location>
        <position position="193"/>
    </location>
    <ligand>
        <name>Zn(2+)</name>
        <dbReference type="ChEBI" id="CHEBI:29105"/>
        <label>2</label>
    </ligand>
</feature>
<feature type="binding site" evidence="1">
    <location>
        <position position="204"/>
    </location>
    <ligand>
        <name>Zn(2+)</name>
        <dbReference type="ChEBI" id="CHEBI:29105"/>
        <label>1</label>
    </ligand>
</feature>
<feature type="binding site" evidence="1">
    <location>
        <position position="207"/>
    </location>
    <ligand>
        <name>Zn(2+)</name>
        <dbReference type="ChEBI" id="CHEBI:29105"/>
        <label>1</label>
    </ligand>
</feature>
<reference key="1">
    <citation type="journal article" date="2007" name="Proc. Natl. Acad. Sci. U.S.A.">
        <title>The Orientia tsutsugamushi genome reveals massive proliferation of conjugative type IV secretion system and host-cell interaction genes.</title>
        <authorList>
            <person name="Cho N.-H."/>
            <person name="Kim H.-R."/>
            <person name="Lee J.-H."/>
            <person name="Kim S.-Y."/>
            <person name="Kim J."/>
            <person name="Cha S."/>
            <person name="Kim S.-Y."/>
            <person name="Darby A.C."/>
            <person name="Fuxelius H.-H."/>
            <person name="Yin J."/>
            <person name="Kim J.H."/>
            <person name="Kim J."/>
            <person name="Lee S.J."/>
            <person name="Koh Y.-S."/>
            <person name="Jang W.-J."/>
            <person name="Park K.-H."/>
            <person name="Andersson S.G.E."/>
            <person name="Choi M.-S."/>
            <person name="Kim I.-S."/>
        </authorList>
    </citation>
    <scope>NUCLEOTIDE SEQUENCE [LARGE SCALE GENOMIC DNA]</scope>
    <source>
        <strain>Boryong</strain>
    </source>
</reference>
<proteinExistence type="inferred from homology"/>
<gene>
    <name evidence="1" type="primary">dnaJ</name>
    <name type="ordered locus">OTBS_0703</name>
</gene>
<keyword id="KW-0143">Chaperone</keyword>
<keyword id="KW-0963">Cytoplasm</keyword>
<keyword id="KW-0235">DNA replication</keyword>
<keyword id="KW-0479">Metal-binding</keyword>
<keyword id="KW-1185">Reference proteome</keyword>
<keyword id="KW-0677">Repeat</keyword>
<keyword id="KW-0346">Stress response</keyword>
<keyword id="KW-0862">Zinc</keyword>
<keyword id="KW-0863">Zinc-finger</keyword>
<accession>A5CD86</accession>
<evidence type="ECO:0000255" key="1">
    <source>
        <dbReference type="HAMAP-Rule" id="MF_01152"/>
    </source>
</evidence>
<organism>
    <name type="scientific">Orientia tsutsugamushi (strain Boryong)</name>
    <name type="common">Rickettsia tsutsugamushi</name>
    <dbReference type="NCBI Taxonomy" id="357244"/>
    <lineage>
        <taxon>Bacteria</taxon>
        <taxon>Pseudomonadati</taxon>
        <taxon>Pseudomonadota</taxon>
        <taxon>Alphaproteobacteria</taxon>
        <taxon>Rickettsiales</taxon>
        <taxon>Rickettsiaceae</taxon>
        <taxon>Rickettsieae</taxon>
        <taxon>Orientia</taxon>
    </lineage>
</organism>
<name>DNAJ_ORITB</name>
<sequence length="377" mass="41344">MSDLDYYQVLGVSRTASQEEIKRAYRKLVLKYHPDHNPGDKNAEQKIKNINEAYDILKDEKKRSAYDQLGHQAFKNSGGGNYQQHHGFTGGIDPNDIFENIFGDFMGARRSSKTAFSKKAGANLKYDISLTLEEAFYGVTKIISFKTALTCDACAGKGSLDNNSTSSCPTCRGSGVTRSQQGFFFFENTCQTCRGAGHVIKNPCTKCYGEGRYINTRNLEVKIPAGVKEGSRIKLTGEGEAGSRGGKTGDLYVCITLIPHNTFSVDGNDLHCQLDINCTTAALGGEVEVADITGSKLKLKIPAGTQNNHKLKLSGKGMQILHSDRCGNMIVHVNIKVPKSLTKSQRELMIKLDKELNEASEEGFLSKVRNFWASGSE</sequence>